<reference key="1">
    <citation type="journal article" date="2005" name="Nucleic Acids Res.">
        <title>Genome dynamics and diversity of Shigella species, the etiologic agents of bacillary dysentery.</title>
        <authorList>
            <person name="Yang F."/>
            <person name="Yang J."/>
            <person name="Zhang X."/>
            <person name="Chen L."/>
            <person name="Jiang Y."/>
            <person name="Yan Y."/>
            <person name="Tang X."/>
            <person name="Wang J."/>
            <person name="Xiong Z."/>
            <person name="Dong J."/>
            <person name="Xue Y."/>
            <person name="Zhu Y."/>
            <person name="Xu X."/>
            <person name="Sun L."/>
            <person name="Chen S."/>
            <person name="Nie H."/>
            <person name="Peng J."/>
            <person name="Xu J."/>
            <person name="Wang Y."/>
            <person name="Yuan Z."/>
            <person name="Wen Y."/>
            <person name="Yao Z."/>
            <person name="Shen Y."/>
            <person name="Qiang B."/>
            <person name="Hou Y."/>
            <person name="Yu J."/>
            <person name="Jin Q."/>
        </authorList>
    </citation>
    <scope>NUCLEOTIDE SEQUENCE [LARGE SCALE GENOMIC DNA]</scope>
    <source>
        <strain>Sd197</strain>
    </source>
</reference>
<feature type="chain" id="PRO_1000066933" description="N-acetylneuraminate lyase">
    <location>
        <begin position="1"/>
        <end position="297"/>
    </location>
</feature>
<feature type="active site" description="Proton donor" evidence="1">
    <location>
        <position position="137"/>
    </location>
</feature>
<feature type="active site" description="Schiff-base intermediate with substrate" evidence="1">
    <location>
        <position position="165"/>
    </location>
</feature>
<feature type="binding site" evidence="1">
    <location>
        <position position="47"/>
    </location>
    <ligand>
        <name>aceneuramate</name>
        <dbReference type="ChEBI" id="CHEBI:173083"/>
    </ligand>
</feature>
<feature type="binding site" evidence="1">
    <location>
        <position position="48"/>
    </location>
    <ligand>
        <name>aceneuramate</name>
        <dbReference type="ChEBI" id="CHEBI:173083"/>
    </ligand>
</feature>
<feature type="binding site" evidence="1">
    <location>
        <position position="167"/>
    </location>
    <ligand>
        <name>aceneuramate</name>
        <dbReference type="ChEBI" id="CHEBI:173083"/>
    </ligand>
</feature>
<feature type="binding site" evidence="1">
    <location>
        <position position="189"/>
    </location>
    <ligand>
        <name>aceneuramate</name>
        <dbReference type="ChEBI" id="CHEBI:173083"/>
    </ligand>
</feature>
<feature type="binding site" evidence="1">
    <location>
        <position position="191"/>
    </location>
    <ligand>
        <name>aceneuramate</name>
        <dbReference type="ChEBI" id="CHEBI:173083"/>
    </ligand>
</feature>
<feature type="binding site" evidence="1">
    <location>
        <position position="192"/>
    </location>
    <ligand>
        <name>aceneuramate</name>
        <dbReference type="ChEBI" id="CHEBI:173083"/>
    </ligand>
</feature>
<feature type="binding site" evidence="1">
    <location>
        <position position="208"/>
    </location>
    <ligand>
        <name>aceneuramate</name>
        <dbReference type="ChEBI" id="CHEBI:173083"/>
    </ligand>
</feature>
<dbReference type="EC" id="4.1.3.3" evidence="1"/>
<dbReference type="EMBL" id="CP000034">
    <property type="protein sequence ID" value="ABB63391.1"/>
    <property type="molecule type" value="Genomic_DNA"/>
</dbReference>
<dbReference type="RefSeq" id="WP_000224714.1">
    <property type="nucleotide sequence ID" value="NC_007606.1"/>
</dbReference>
<dbReference type="RefSeq" id="YP_404882.1">
    <property type="nucleotide sequence ID" value="NC_007606.1"/>
</dbReference>
<dbReference type="SMR" id="Q32BB4"/>
<dbReference type="STRING" id="300267.SDY_3400"/>
<dbReference type="EnsemblBacteria" id="ABB63391">
    <property type="protein sequence ID" value="ABB63391"/>
    <property type="gene ID" value="SDY_3400"/>
</dbReference>
<dbReference type="GeneID" id="93778761"/>
<dbReference type="KEGG" id="sdy:SDY_3400"/>
<dbReference type="PATRIC" id="fig|300267.13.peg.4056"/>
<dbReference type="HOGENOM" id="CLU_049343_6_0_6"/>
<dbReference type="UniPathway" id="UPA00629">
    <property type="reaction ID" value="UER00680"/>
</dbReference>
<dbReference type="Proteomes" id="UP000002716">
    <property type="component" value="Chromosome"/>
</dbReference>
<dbReference type="GO" id="GO:0005829">
    <property type="term" value="C:cytosol"/>
    <property type="evidence" value="ECO:0007669"/>
    <property type="project" value="TreeGrafter"/>
</dbReference>
<dbReference type="GO" id="GO:0008747">
    <property type="term" value="F:N-acetylneuraminate lyase activity"/>
    <property type="evidence" value="ECO:0007669"/>
    <property type="project" value="UniProtKB-UniRule"/>
</dbReference>
<dbReference type="GO" id="GO:0005975">
    <property type="term" value="P:carbohydrate metabolic process"/>
    <property type="evidence" value="ECO:0007669"/>
    <property type="project" value="UniProtKB-UniRule"/>
</dbReference>
<dbReference type="GO" id="GO:0019262">
    <property type="term" value="P:N-acetylneuraminate catabolic process"/>
    <property type="evidence" value="ECO:0007669"/>
    <property type="project" value="UniProtKB-UniRule"/>
</dbReference>
<dbReference type="CDD" id="cd00954">
    <property type="entry name" value="NAL"/>
    <property type="match status" value="1"/>
</dbReference>
<dbReference type="FunFam" id="3.20.20.70:FF:000039">
    <property type="entry name" value="N-acetylneuraminate lyase"/>
    <property type="match status" value="1"/>
</dbReference>
<dbReference type="Gene3D" id="3.20.20.70">
    <property type="entry name" value="Aldolase class I"/>
    <property type="match status" value="1"/>
</dbReference>
<dbReference type="HAMAP" id="MF_01237">
    <property type="entry name" value="N_acetylneuram_lyase"/>
    <property type="match status" value="1"/>
</dbReference>
<dbReference type="InterPro" id="IPR013785">
    <property type="entry name" value="Aldolase_TIM"/>
</dbReference>
<dbReference type="InterPro" id="IPR002220">
    <property type="entry name" value="DapA-like"/>
</dbReference>
<dbReference type="InterPro" id="IPR005264">
    <property type="entry name" value="NanA"/>
</dbReference>
<dbReference type="InterPro" id="IPR020625">
    <property type="entry name" value="Schiff_base-form_aldolases_AS"/>
</dbReference>
<dbReference type="InterPro" id="IPR020624">
    <property type="entry name" value="Schiff_base-form_aldolases_CS"/>
</dbReference>
<dbReference type="NCBIfam" id="TIGR00683">
    <property type="entry name" value="nanA"/>
    <property type="match status" value="1"/>
</dbReference>
<dbReference type="NCBIfam" id="NF003164">
    <property type="entry name" value="PRK04147.1"/>
    <property type="match status" value="1"/>
</dbReference>
<dbReference type="PANTHER" id="PTHR42849">
    <property type="entry name" value="N-ACETYLNEURAMINATE LYASE"/>
    <property type="match status" value="1"/>
</dbReference>
<dbReference type="PANTHER" id="PTHR42849:SF1">
    <property type="entry name" value="N-ACETYLNEURAMINATE LYASE"/>
    <property type="match status" value="1"/>
</dbReference>
<dbReference type="Pfam" id="PF00701">
    <property type="entry name" value="DHDPS"/>
    <property type="match status" value="1"/>
</dbReference>
<dbReference type="PIRSF" id="PIRSF001365">
    <property type="entry name" value="DHDPS"/>
    <property type="match status" value="1"/>
</dbReference>
<dbReference type="PRINTS" id="PR00146">
    <property type="entry name" value="DHPICSNTHASE"/>
</dbReference>
<dbReference type="SMART" id="SM01130">
    <property type="entry name" value="DHDPS"/>
    <property type="match status" value="1"/>
</dbReference>
<dbReference type="SUPFAM" id="SSF51569">
    <property type="entry name" value="Aldolase"/>
    <property type="match status" value="1"/>
</dbReference>
<dbReference type="PROSITE" id="PS00665">
    <property type="entry name" value="DHDPS_1"/>
    <property type="match status" value="1"/>
</dbReference>
<dbReference type="PROSITE" id="PS00666">
    <property type="entry name" value="DHDPS_2"/>
    <property type="match status" value="1"/>
</dbReference>
<protein>
    <recommendedName>
        <fullName evidence="1">N-acetylneuraminate lyase</fullName>
        <shortName evidence="1">NAL</shortName>
        <shortName evidence="1">Neu5Ac lyase</shortName>
        <ecNumber evidence="1">4.1.3.3</ecNumber>
    </recommendedName>
    <alternativeName>
        <fullName evidence="1">N-acetylneuraminate pyruvate-lyase</fullName>
    </alternativeName>
    <alternativeName>
        <fullName evidence="1">N-acetylneuraminic acid aldolase</fullName>
    </alternativeName>
    <alternativeName>
        <fullName evidence="1">Sialate lyase</fullName>
    </alternativeName>
    <alternativeName>
        <fullName evidence="1">Sialic acid aldolase</fullName>
    </alternativeName>
    <alternativeName>
        <fullName evidence="1">Sialic acid lyase</fullName>
    </alternativeName>
</protein>
<accession>Q32BB4</accession>
<sequence>MATNLRGVMAALLTPFDQQQALDKASLRRLVQFNIQQGIDGLYVGGSTGEAFVQSLSEREQVLEIVAEEAKGKIKLIAHVGCVSTAESQQLAASAKRYGFDAVSAVTPFYYPFSFEEHCDHYRAIIDSADGLPMVVYNIPALSGVKLTLDQINTLVTLPGVGALKQTSGDLYQMEQIRREHPDLVLYNGYDEIFASGLLAGADGGIGSTYNIMGWRYQGIVKALKEGDIQTAQKLQTECNKVIDLLIKTGVFRGLKTVLHYMDVVSVPLCRKPFGPVDEKYLPELKALAQQLMQERG</sequence>
<gene>
    <name evidence="1" type="primary">nanA</name>
    <name type="ordered locus">SDY_3400</name>
</gene>
<comment type="function">
    <text evidence="1">Catalyzes the reversible aldol cleavage of N-acetylneuraminic acid (sialic acid; Neu5Ac) to form pyruvate and N-acetylmannosamine (ManNAc) via a Schiff base intermediate.</text>
</comment>
<comment type="catalytic activity">
    <reaction evidence="1">
        <text>aceneuramate = aldehydo-N-acetyl-D-mannosamine + pyruvate</text>
        <dbReference type="Rhea" id="RHEA:23296"/>
        <dbReference type="ChEBI" id="CHEBI:15361"/>
        <dbReference type="ChEBI" id="CHEBI:17122"/>
        <dbReference type="ChEBI" id="CHEBI:173083"/>
        <dbReference type="EC" id="4.1.3.3"/>
    </reaction>
</comment>
<comment type="pathway">
    <text evidence="1">Amino-sugar metabolism; N-acetylneuraminate degradation; D-fructose 6-phosphate from N-acetylneuraminate: step 1/5.</text>
</comment>
<comment type="subunit">
    <text evidence="1">Homotetramer.</text>
</comment>
<comment type="subcellular location">
    <subcellularLocation>
        <location evidence="1">Cytoplasm</location>
    </subcellularLocation>
</comment>
<comment type="similarity">
    <text evidence="1">Belongs to the DapA family. NanA subfamily.</text>
</comment>
<proteinExistence type="inferred from homology"/>
<keyword id="KW-0119">Carbohydrate metabolism</keyword>
<keyword id="KW-0963">Cytoplasm</keyword>
<keyword id="KW-0456">Lyase</keyword>
<keyword id="KW-1185">Reference proteome</keyword>
<keyword id="KW-0704">Schiff base</keyword>
<organism>
    <name type="scientific">Shigella dysenteriae serotype 1 (strain Sd197)</name>
    <dbReference type="NCBI Taxonomy" id="300267"/>
    <lineage>
        <taxon>Bacteria</taxon>
        <taxon>Pseudomonadati</taxon>
        <taxon>Pseudomonadota</taxon>
        <taxon>Gammaproteobacteria</taxon>
        <taxon>Enterobacterales</taxon>
        <taxon>Enterobacteriaceae</taxon>
        <taxon>Shigella</taxon>
    </lineage>
</organism>
<name>NANA_SHIDS</name>
<evidence type="ECO:0000255" key="1">
    <source>
        <dbReference type="HAMAP-Rule" id="MF_01237"/>
    </source>
</evidence>